<reference key="1">
    <citation type="journal article" date="2009" name="PLoS Genet.">
        <title>Organised genome dynamics in the Escherichia coli species results in highly diverse adaptive paths.</title>
        <authorList>
            <person name="Touchon M."/>
            <person name="Hoede C."/>
            <person name="Tenaillon O."/>
            <person name="Barbe V."/>
            <person name="Baeriswyl S."/>
            <person name="Bidet P."/>
            <person name="Bingen E."/>
            <person name="Bonacorsi S."/>
            <person name="Bouchier C."/>
            <person name="Bouvet O."/>
            <person name="Calteau A."/>
            <person name="Chiapello H."/>
            <person name="Clermont O."/>
            <person name="Cruveiller S."/>
            <person name="Danchin A."/>
            <person name="Diard M."/>
            <person name="Dossat C."/>
            <person name="Karoui M.E."/>
            <person name="Frapy E."/>
            <person name="Garry L."/>
            <person name="Ghigo J.M."/>
            <person name="Gilles A.M."/>
            <person name="Johnson J."/>
            <person name="Le Bouguenec C."/>
            <person name="Lescat M."/>
            <person name="Mangenot S."/>
            <person name="Martinez-Jehanne V."/>
            <person name="Matic I."/>
            <person name="Nassif X."/>
            <person name="Oztas S."/>
            <person name="Petit M.A."/>
            <person name="Pichon C."/>
            <person name="Rouy Z."/>
            <person name="Ruf C.S."/>
            <person name="Schneider D."/>
            <person name="Tourret J."/>
            <person name="Vacherie B."/>
            <person name="Vallenet D."/>
            <person name="Medigue C."/>
            <person name="Rocha E.P.C."/>
            <person name="Denamur E."/>
        </authorList>
    </citation>
    <scope>NUCLEOTIDE SEQUENCE [LARGE SCALE GENOMIC DNA]</scope>
    <source>
        <strain>55989 / EAEC</strain>
    </source>
</reference>
<gene>
    <name evidence="1" type="primary">clpX</name>
    <name type="ordered locus">EC55989_0452</name>
</gene>
<dbReference type="EMBL" id="CU928145">
    <property type="protein sequence ID" value="CAU96325.1"/>
    <property type="molecule type" value="Genomic_DNA"/>
</dbReference>
<dbReference type="RefSeq" id="WP_000130305.1">
    <property type="nucleotide sequence ID" value="NC_011748.1"/>
</dbReference>
<dbReference type="SMR" id="B7L675"/>
<dbReference type="GeneID" id="93777016"/>
<dbReference type="KEGG" id="eck:EC55989_0452"/>
<dbReference type="HOGENOM" id="CLU_014218_8_2_6"/>
<dbReference type="Proteomes" id="UP000000746">
    <property type="component" value="Chromosome"/>
</dbReference>
<dbReference type="GO" id="GO:0009376">
    <property type="term" value="C:HslUV protease complex"/>
    <property type="evidence" value="ECO:0007669"/>
    <property type="project" value="TreeGrafter"/>
</dbReference>
<dbReference type="GO" id="GO:0005524">
    <property type="term" value="F:ATP binding"/>
    <property type="evidence" value="ECO:0007669"/>
    <property type="project" value="UniProtKB-UniRule"/>
</dbReference>
<dbReference type="GO" id="GO:0016887">
    <property type="term" value="F:ATP hydrolysis activity"/>
    <property type="evidence" value="ECO:0007669"/>
    <property type="project" value="InterPro"/>
</dbReference>
<dbReference type="GO" id="GO:0140662">
    <property type="term" value="F:ATP-dependent protein folding chaperone"/>
    <property type="evidence" value="ECO:0007669"/>
    <property type="project" value="InterPro"/>
</dbReference>
<dbReference type="GO" id="GO:0046983">
    <property type="term" value="F:protein dimerization activity"/>
    <property type="evidence" value="ECO:0007669"/>
    <property type="project" value="InterPro"/>
</dbReference>
<dbReference type="GO" id="GO:0051082">
    <property type="term" value="F:unfolded protein binding"/>
    <property type="evidence" value="ECO:0007669"/>
    <property type="project" value="UniProtKB-UniRule"/>
</dbReference>
<dbReference type="GO" id="GO:0008270">
    <property type="term" value="F:zinc ion binding"/>
    <property type="evidence" value="ECO:0007669"/>
    <property type="project" value="InterPro"/>
</dbReference>
<dbReference type="GO" id="GO:0051301">
    <property type="term" value="P:cell division"/>
    <property type="evidence" value="ECO:0007669"/>
    <property type="project" value="TreeGrafter"/>
</dbReference>
<dbReference type="GO" id="GO:0051603">
    <property type="term" value="P:proteolysis involved in protein catabolic process"/>
    <property type="evidence" value="ECO:0007669"/>
    <property type="project" value="TreeGrafter"/>
</dbReference>
<dbReference type="CDD" id="cd19497">
    <property type="entry name" value="RecA-like_ClpX"/>
    <property type="match status" value="1"/>
</dbReference>
<dbReference type="FunFam" id="1.10.8.60:FF:000002">
    <property type="entry name" value="ATP-dependent Clp protease ATP-binding subunit ClpX"/>
    <property type="match status" value="1"/>
</dbReference>
<dbReference type="FunFam" id="3.40.50.300:FF:000005">
    <property type="entry name" value="ATP-dependent Clp protease ATP-binding subunit ClpX"/>
    <property type="match status" value="1"/>
</dbReference>
<dbReference type="Gene3D" id="1.10.8.60">
    <property type="match status" value="1"/>
</dbReference>
<dbReference type="Gene3D" id="6.20.220.10">
    <property type="entry name" value="ClpX chaperone, C4-type zinc finger domain"/>
    <property type="match status" value="1"/>
</dbReference>
<dbReference type="Gene3D" id="3.40.50.300">
    <property type="entry name" value="P-loop containing nucleotide triphosphate hydrolases"/>
    <property type="match status" value="1"/>
</dbReference>
<dbReference type="HAMAP" id="MF_00175">
    <property type="entry name" value="ClpX"/>
    <property type="match status" value="1"/>
</dbReference>
<dbReference type="InterPro" id="IPR003593">
    <property type="entry name" value="AAA+_ATPase"/>
</dbReference>
<dbReference type="InterPro" id="IPR050052">
    <property type="entry name" value="ATP-dep_Clp_protease_ClpX"/>
</dbReference>
<dbReference type="InterPro" id="IPR003959">
    <property type="entry name" value="ATPase_AAA_core"/>
</dbReference>
<dbReference type="InterPro" id="IPR019489">
    <property type="entry name" value="Clp_ATPase_C"/>
</dbReference>
<dbReference type="InterPro" id="IPR004487">
    <property type="entry name" value="Clp_protease_ATP-bd_su_ClpX"/>
</dbReference>
<dbReference type="InterPro" id="IPR046425">
    <property type="entry name" value="ClpX_bact"/>
</dbReference>
<dbReference type="InterPro" id="IPR027417">
    <property type="entry name" value="P-loop_NTPase"/>
</dbReference>
<dbReference type="InterPro" id="IPR010603">
    <property type="entry name" value="Znf_CppX_C4"/>
</dbReference>
<dbReference type="InterPro" id="IPR038366">
    <property type="entry name" value="Znf_CppX_C4_sf"/>
</dbReference>
<dbReference type="NCBIfam" id="TIGR00382">
    <property type="entry name" value="clpX"/>
    <property type="match status" value="1"/>
</dbReference>
<dbReference type="NCBIfam" id="NF003745">
    <property type="entry name" value="PRK05342.1"/>
    <property type="match status" value="1"/>
</dbReference>
<dbReference type="PANTHER" id="PTHR48102:SF7">
    <property type="entry name" value="ATP-DEPENDENT CLP PROTEASE ATP-BINDING SUBUNIT CLPX-LIKE, MITOCHONDRIAL"/>
    <property type="match status" value="1"/>
</dbReference>
<dbReference type="PANTHER" id="PTHR48102">
    <property type="entry name" value="ATP-DEPENDENT CLP PROTEASE ATP-BINDING SUBUNIT CLPX-LIKE, MITOCHONDRIAL-RELATED"/>
    <property type="match status" value="1"/>
</dbReference>
<dbReference type="Pfam" id="PF07724">
    <property type="entry name" value="AAA_2"/>
    <property type="match status" value="1"/>
</dbReference>
<dbReference type="Pfam" id="PF10431">
    <property type="entry name" value="ClpB_D2-small"/>
    <property type="match status" value="1"/>
</dbReference>
<dbReference type="Pfam" id="PF06689">
    <property type="entry name" value="zf-C4_ClpX"/>
    <property type="match status" value="1"/>
</dbReference>
<dbReference type="SMART" id="SM00382">
    <property type="entry name" value="AAA"/>
    <property type="match status" value="1"/>
</dbReference>
<dbReference type="SMART" id="SM01086">
    <property type="entry name" value="ClpB_D2-small"/>
    <property type="match status" value="1"/>
</dbReference>
<dbReference type="SMART" id="SM00994">
    <property type="entry name" value="zf-C4_ClpX"/>
    <property type="match status" value="1"/>
</dbReference>
<dbReference type="SUPFAM" id="SSF57716">
    <property type="entry name" value="Glucocorticoid receptor-like (DNA-binding domain)"/>
    <property type="match status" value="1"/>
</dbReference>
<dbReference type="SUPFAM" id="SSF52540">
    <property type="entry name" value="P-loop containing nucleoside triphosphate hydrolases"/>
    <property type="match status" value="1"/>
</dbReference>
<dbReference type="PROSITE" id="PS51902">
    <property type="entry name" value="CLPX_ZB"/>
    <property type="match status" value="1"/>
</dbReference>
<sequence length="424" mass="46356">MTDKRKDGSGKLLYCSFCGKSQHEVRKLIAGPSVYICDECVDLCNDIIREEIKEVAPHRERSALPTPHEIRNHLDDYVIGQEQAKKVLAVAVYNHYKRLRNGDTSNGVELGKSNILLIGPTGSGKTLLAETLARLLDVPFTMADATTLTEAGYVGEDVENIIQKLLQKCDYDVQKAQRGIVYIDEIDKISRKSDNPSITRDVSGEGVQQALLKLIEGTVAAVPPQGGRKHPQQEFLQVDTSKILFICGGAFAGLDKVISHRVETGSGIGFGATVKAKSDKASEGELLAQVEPEDLIKFGLIPEFIGRLPVVATLNELSEEALIQILKEPKNALTKQYQALFNLEGVDLEFRDEALDAIAKKAMARKTGARGLRSIVEAALLDTMYDLPSMEDVEKVVIDESVIDGQSKPLLIYGKPEAQQASGE</sequence>
<organism>
    <name type="scientific">Escherichia coli (strain 55989 / EAEC)</name>
    <dbReference type="NCBI Taxonomy" id="585055"/>
    <lineage>
        <taxon>Bacteria</taxon>
        <taxon>Pseudomonadati</taxon>
        <taxon>Pseudomonadota</taxon>
        <taxon>Gammaproteobacteria</taxon>
        <taxon>Enterobacterales</taxon>
        <taxon>Enterobacteriaceae</taxon>
        <taxon>Escherichia</taxon>
    </lineage>
</organism>
<keyword id="KW-0067">ATP-binding</keyword>
<keyword id="KW-0143">Chaperone</keyword>
<keyword id="KW-0479">Metal-binding</keyword>
<keyword id="KW-0547">Nucleotide-binding</keyword>
<keyword id="KW-1185">Reference proteome</keyword>
<keyword id="KW-0862">Zinc</keyword>
<accession>B7L675</accession>
<protein>
    <recommendedName>
        <fullName evidence="1">ATP-dependent Clp protease ATP-binding subunit ClpX</fullName>
    </recommendedName>
</protein>
<proteinExistence type="inferred from homology"/>
<evidence type="ECO:0000255" key="1">
    <source>
        <dbReference type="HAMAP-Rule" id="MF_00175"/>
    </source>
</evidence>
<evidence type="ECO:0000255" key="2">
    <source>
        <dbReference type="PROSITE-ProRule" id="PRU01250"/>
    </source>
</evidence>
<name>CLPX_ECO55</name>
<feature type="chain" id="PRO_1000123834" description="ATP-dependent Clp protease ATP-binding subunit ClpX">
    <location>
        <begin position="1"/>
        <end position="424"/>
    </location>
</feature>
<feature type="domain" description="ClpX-type ZB" evidence="2">
    <location>
        <begin position="2"/>
        <end position="56"/>
    </location>
</feature>
<feature type="binding site" evidence="2">
    <location>
        <position position="15"/>
    </location>
    <ligand>
        <name>Zn(2+)</name>
        <dbReference type="ChEBI" id="CHEBI:29105"/>
    </ligand>
</feature>
<feature type="binding site" evidence="2">
    <location>
        <position position="18"/>
    </location>
    <ligand>
        <name>Zn(2+)</name>
        <dbReference type="ChEBI" id="CHEBI:29105"/>
    </ligand>
</feature>
<feature type="binding site" evidence="2">
    <location>
        <position position="37"/>
    </location>
    <ligand>
        <name>Zn(2+)</name>
        <dbReference type="ChEBI" id="CHEBI:29105"/>
    </ligand>
</feature>
<feature type="binding site" evidence="2">
    <location>
        <position position="40"/>
    </location>
    <ligand>
        <name>Zn(2+)</name>
        <dbReference type="ChEBI" id="CHEBI:29105"/>
    </ligand>
</feature>
<feature type="binding site" evidence="1">
    <location>
        <begin position="120"/>
        <end position="127"/>
    </location>
    <ligand>
        <name>ATP</name>
        <dbReference type="ChEBI" id="CHEBI:30616"/>
    </ligand>
</feature>
<comment type="function">
    <text evidence="1">ATP-dependent specificity component of the Clp protease. It directs the protease to specific substrates. Can perform chaperone functions in the absence of ClpP.</text>
</comment>
<comment type="subunit">
    <text evidence="1">Component of the ClpX-ClpP complex. Forms a hexameric ring that, in the presence of ATP, binds to fourteen ClpP subunits assembled into a disk-like structure with a central cavity, resembling the structure of eukaryotic proteasomes.</text>
</comment>
<comment type="similarity">
    <text evidence="1">Belongs to the ClpX chaperone family.</text>
</comment>